<name>Y1066_PELTS</name>
<comment type="similarity">
    <text evidence="1">Belongs to the UPF0473 family.</text>
</comment>
<evidence type="ECO:0000255" key="1">
    <source>
        <dbReference type="HAMAP-Rule" id="MF_01448"/>
    </source>
</evidence>
<accession>A5D3C4</accession>
<reference key="1">
    <citation type="journal article" date="2008" name="Genome Res.">
        <title>The genome of Pelotomaculum thermopropionicum reveals niche-associated evolution in anaerobic microbiota.</title>
        <authorList>
            <person name="Kosaka T."/>
            <person name="Kato S."/>
            <person name="Shimoyama T."/>
            <person name="Ishii S."/>
            <person name="Abe T."/>
            <person name="Watanabe K."/>
        </authorList>
    </citation>
    <scope>NUCLEOTIDE SEQUENCE [LARGE SCALE GENOMIC DNA]</scope>
    <source>
        <strain>DSM 13744 / JCM 10971 / SI</strain>
    </source>
</reference>
<protein>
    <recommendedName>
        <fullName evidence="1">UPF0473 protein PTH_1066</fullName>
    </recommendedName>
</protein>
<organism>
    <name type="scientific">Pelotomaculum thermopropionicum (strain DSM 13744 / JCM 10971 / SI)</name>
    <dbReference type="NCBI Taxonomy" id="370438"/>
    <lineage>
        <taxon>Bacteria</taxon>
        <taxon>Bacillati</taxon>
        <taxon>Bacillota</taxon>
        <taxon>Clostridia</taxon>
        <taxon>Eubacteriales</taxon>
        <taxon>Desulfotomaculaceae</taxon>
        <taxon>Pelotomaculum</taxon>
    </lineage>
</organism>
<dbReference type="EMBL" id="AP009389">
    <property type="protein sequence ID" value="BAF59247.1"/>
    <property type="molecule type" value="Genomic_DNA"/>
</dbReference>
<dbReference type="STRING" id="370438.PTH_1066"/>
<dbReference type="KEGG" id="pth:PTH_1066"/>
<dbReference type="eggNOG" id="COG3906">
    <property type="taxonomic scope" value="Bacteria"/>
</dbReference>
<dbReference type="HOGENOM" id="CLU_146610_8_1_9"/>
<dbReference type="Proteomes" id="UP000006556">
    <property type="component" value="Chromosome"/>
</dbReference>
<dbReference type="HAMAP" id="MF_01448">
    <property type="entry name" value="UPF0473"/>
    <property type="match status" value="1"/>
</dbReference>
<dbReference type="InterPro" id="IPR009711">
    <property type="entry name" value="UPF0473"/>
</dbReference>
<dbReference type="Pfam" id="PF06949">
    <property type="entry name" value="DUF1292"/>
    <property type="match status" value="1"/>
</dbReference>
<gene>
    <name type="ordered locus">PTH_1066</name>
</gene>
<sequence>MTETEEVITLVDEEGVEHDFTVIDIIEVDGSEYAILLPMEDECEEAIILKLTHDENGNELLVDIEDDEEWEKVADAWEEMLAEEEAD</sequence>
<proteinExistence type="inferred from homology"/>
<keyword id="KW-1185">Reference proteome</keyword>
<feature type="chain" id="PRO_1000087503" description="UPF0473 protein PTH_1066">
    <location>
        <begin position="1"/>
        <end position="87"/>
    </location>
</feature>